<proteinExistence type="inferred from homology"/>
<reference key="1">
    <citation type="journal article" date="2009" name="BMC Genomics">
        <title>Analysis of the Rickettsia africae genome reveals that virulence acquisition in Rickettsia species may be explained by genome reduction.</title>
        <authorList>
            <person name="Fournier P.-E."/>
            <person name="El Karkouri K."/>
            <person name="Leroy Q."/>
            <person name="Robert C."/>
            <person name="Giumelli B."/>
            <person name="Renesto P."/>
            <person name="Socolovschi C."/>
            <person name="Parola P."/>
            <person name="Audic S."/>
            <person name="Raoult D."/>
        </authorList>
    </citation>
    <scope>NUCLEOTIDE SEQUENCE [LARGE SCALE GENOMIC DNA]</scope>
    <source>
        <strain>ESF-5</strain>
    </source>
</reference>
<gene>
    <name evidence="1" type="primary">fni</name>
    <name type="ordered locus">RAF_ORF0665</name>
</gene>
<keyword id="KW-0963">Cytoplasm</keyword>
<keyword id="KW-0285">Flavoprotein</keyword>
<keyword id="KW-0288">FMN</keyword>
<keyword id="KW-0413">Isomerase</keyword>
<keyword id="KW-0414">Isoprene biosynthesis</keyword>
<keyword id="KW-0460">Magnesium</keyword>
<keyword id="KW-0479">Metal-binding</keyword>
<keyword id="KW-0521">NADP</keyword>
<name>IDI2_RICAE</name>
<sequence>MLKDQNLDIERKQDHIEINLTKNVESTLKSGFESIHFIHNALPEINYDSVNTTTTFLGKSLQAPILISSMTGGTTRARDINYRLAQVAQKAGIAMGLGSMRVLLTEPDTIKTFAVRHIAPDIPLLANIGAVQLNYGVTPKECQYLVDAIKADALILHLNVLQELTQPEGNRNWEKLLPKIREVVNYLSIPVIVKEVGYGLSKKVAESLIDAGVKVLDIAGSGGTSWSQVEAYRATNSLQNRIASSFINWGIPTLDSLKMVREVSKDIPIITSGGLKSGIDGAKAIRIGANIFGLAGQFLKAADTSESLLSEEIQLIIEQLKITMLCTGSRTLKDLAKAEIRL</sequence>
<protein>
    <recommendedName>
        <fullName evidence="1">Isopentenyl-diphosphate delta-isomerase</fullName>
        <shortName evidence="1">IPP isomerase</shortName>
        <ecNumber evidence="1">5.3.3.2</ecNumber>
    </recommendedName>
    <alternativeName>
        <fullName evidence="1">Isopentenyl diphosphate:dimethylallyl diphosphate isomerase</fullName>
    </alternativeName>
    <alternativeName>
        <fullName evidence="1">Isopentenyl pyrophosphate isomerase</fullName>
    </alternativeName>
    <alternativeName>
        <fullName evidence="1">Type 2 isopentenyl diphosphate isomerase</fullName>
        <shortName evidence="1">IDI-2</shortName>
    </alternativeName>
</protein>
<organism>
    <name type="scientific">Rickettsia africae (strain ESF-5)</name>
    <dbReference type="NCBI Taxonomy" id="347255"/>
    <lineage>
        <taxon>Bacteria</taxon>
        <taxon>Pseudomonadati</taxon>
        <taxon>Pseudomonadota</taxon>
        <taxon>Alphaproteobacteria</taxon>
        <taxon>Rickettsiales</taxon>
        <taxon>Rickettsiaceae</taxon>
        <taxon>Rickettsieae</taxon>
        <taxon>Rickettsia</taxon>
        <taxon>spotted fever group</taxon>
    </lineage>
</organism>
<dbReference type="EC" id="5.3.3.2" evidence="1"/>
<dbReference type="EMBL" id="CP001612">
    <property type="protein sequence ID" value="ACP53559.1"/>
    <property type="molecule type" value="Genomic_DNA"/>
</dbReference>
<dbReference type="RefSeq" id="WP_012719760.1">
    <property type="nucleotide sequence ID" value="NC_012633.1"/>
</dbReference>
<dbReference type="SMR" id="C3PNP9"/>
<dbReference type="KEGG" id="raf:RAF_ORF0665"/>
<dbReference type="HOGENOM" id="CLU_065515_1_0_5"/>
<dbReference type="Proteomes" id="UP000002305">
    <property type="component" value="Chromosome"/>
</dbReference>
<dbReference type="GO" id="GO:0005737">
    <property type="term" value="C:cytoplasm"/>
    <property type="evidence" value="ECO:0007669"/>
    <property type="project" value="UniProtKB-SubCell"/>
</dbReference>
<dbReference type="GO" id="GO:0010181">
    <property type="term" value="F:FMN binding"/>
    <property type="evidence" value="ECO:0007669"/>
    <property type="project" value="UniProtKB-UniRule"/>
</dbReference>
<dbReference type="GO" id="GO:0004452">
    <property type="term" value="F:isopentenyl-diphosphate delta-isomerase activity"/>
    <property type="evidence" value="ECO:0007669"/>
    <property type="project" value="UniProtKB-UniRule"/>
</dbReference>
<dbReference type="GO" id="GO:0000287">
    <property type="term" value="F:magnesium ion binding"/>
    <property type="evidence" value="ECO:0007669"/>
    <property type="project" value="UniProtKB-UniRule"/>
</dbReference>
<dbReference type="GO" id="GO:0070402">
    <property type="term" value="F:NADPH binding"/>
    <property type="evidence" value="ECO:0007669"/>
    <property type="project" value="UniProtKB-UniRule"/>
</dbReference>
<dbReference type="GO" id="GO:0016491">
    <property type="term" value="F:oxidoreductase activity"/>
    <property type="evidence" value="ECO:0007669"/>
    <property type="project" value="InterPro"/>
</dbReference>
<dbReference type="GO" id="GO:0008299">
    <property type="term" value="P:isoprenoid biosynthetic process"/>
    <property type="evidence" value="ECO:0007669"/>
    <property type="project" value="UniProtKB-UniRule"/>
</dbReference>
<dbReference type="CDD" id="cd02811">
    <property type="entry name" value="IDI-2_FMN"/>
    <property type="match status" value="1"/>
</dbReference>
<dbReference type="Gene3D" id="3.20.20.70">
    <property type="entry name" value="Aldolase class I"/>
    <property type="match status" value="1"/>
</dbReference>
<dbReference type="HAMAP" id="MF_00354">
    <property type="entry name" value="Idi_2"/>
    <property type="match status" value="1"/>
</dbReference>
<dbReference type="InterPro" id="IPR013785">
    <property type="entry name" value="Aldolase_TIM"/>
</dbReference>
<dbReference type="InterPro" id="IPR000262">
    <property type="entry name" value="FMN-dep_DH"/>
</dbReference>
<dbReference type="InterPro" id="IPR011179">
    <property type="entry name" value="IPdP_isomerase"/>
</dbReference>
<dbReference type="NCBIfam" id="TIGR02151">
    <property type="entry name" value="IPP_isom_2"/>
    <property type="match status" value="1"/>
</dbReference>
<dbReference type="PANTHER" id="PTHR43665">
    <property type="entry name" value="ISOPENTENYL-DIPHOSPHATE DELTA-ISOMERASE"/>
    <property type="match status" value="1"/>
</dbReference>
<dbReference type="PANTHER" id="PTHR43665:SF1">
    <property type="entry name" value="ISOPENTENYL-DIPHOSPHATE DELTA-ISOMERASE"/>
    <property type="match status" value="1"/>
</dbReference>
<dbReference type="Pfam" id="PF01070">
    <property type="entry name" value="FMN_dh"/>
    <property type="match status" value="2"/>
</dbReference>
<dbReference type="PIRSF" id="PIRSF003314">
    <property type="entry name" value="IPP_isomerase"/>
    <property type="match status" value="1"/>
</dbReference>
<dbReference type="SUPFAM" id="SSF51395">
    <property type="entry name" value="FMN-linked oxidoreductases"/>
    <property type="match status" value="1"/>
</dbReference>
<comment type="function">
    <text evidence="1">Involved in the biosynthesis of isoprenoids. Catalyzes the 1,3-allylic rearrangement of the homoallylic substrate isopentenyl (IPP) to its allylic isomer, dimethylallyl diphosphate (DMAPP).</text>
</comment>
<comment type="catalytic activity">
    <reaction evidence="1">
        <text>isopentenyl diphosphate = dimethylallyl diphosphate</text>
        <dbReference type="Rhea" id="RHEA:23284"/>
        <dbReference type="ChEBI" id="CHEBI:57623"/>
        <dbReference type="ChEBI" id="CHEBI:128769"/>
        <dbReference type="EC" id="5.3.3.2"/>
    </reaction>
</comment>
<comment type="cofactor">
    <cofactor evidence="1">
        <name>FMN</name>
        <dbReference type="ChEBI" id="CHEBI:58210"/>
    </cofactor>
</comment>
<comment type="cofactor">
    <cofactor evidence="1">
        <name>NADPH</name>
        <dbReference type="ChEBI" id="CHEBI:57783"/>
    </cofactor>
</comment>
<comment type="cofactor">
    <cofactor evidence="1">
        <name>Mg(2+)</name>
        <dbReference type="ChEBI" id="CHEBI:18420"/>
    </cofactor>
</comment>
<comment type="subunit">
    <text evidence="1">Homooctamer. Dimer of tetramers.</text>
</comment>
<comment type="subcellular location">
    <subcellularLocation>
        <location evidence="1">Cytoplasm</location>
    </subcellularLocation>
</comment>
<comment type="similarity">
    <text evidence="1">Belongs to the IPP isomerase type 2 family.</text>
</comment>
<feature type="chain" id="PRO_1000205351" description="Isopentenyl-diphosphate delta-isomerase">
    <location>
        <begin position="1"/>
        <end position="342"/>
    </location>
</feature>
<feature type="binding site" evidence="1">
    <location>
        <begin position="11"/>
        <end position="12"/>
    </location>
    <ligand>
        <name>substrate</name>
    </ligand>
</feature>
<feature type="binding site" evidence="1">
    <location>
        <position position="68"/>
    </location>
    <ligand>
        <name>FMN</name>
        <dbReference type="ChEBI" id="CHEBI:58210"/>
    </ligand>
</feature>
<feature type="binding site" evidence="1">
    <location>
        <begin position="69"/>
        <end position="71"/>
    </location>
    <ligand>
        <name>FMN</name>
        <dbReference type="ChEBI" id="CHEBI:58210"/>
    </ligand>
</feature>
<feature type="binding site" evidence="1">
    <location>
        <begin position="99"/>
        <end position="101"/>
    </location>
    <ligand>
        <name>substrate</name>
    </ligand>
</feature>
<feature type="binding site" evidence="1">
    <location>
        <position position="99"/>
    </location>
    <ligand>
        <name>FMN</name>
        <dbReference type="ChEBI" id="CHEBI:58210"/>
    </ligand>
</feature>
<feature type="binding site" evidence="1">
    <location>
        <position position="127"/>
    </location>
    <ligand>
        <name>FMN</name>
        <dbReference type="ChEBI" id="CHEBI:58210"/>
    </ligand>
</feature>
<feature type="binding site" evidence="1">
    <location>
        <position position="162"/>
    </location>
    <ligand>
        <name>substrate</name>
    </ligand>
</feature>
<feature type="binding site" evidence="1">
    <location>
        <position position="163"/>
    </location>
    <ligand>
        <name>Mg(2+)</name>
        <dbReference type="ChEBI" id="CHEBI:18420"/>
    </ligand>
</feature>
<feature type="binding site" evidence="1">
    <location>
        <position position="194"/>
    </location>
    <ligand>
        <name>FMN</name>
        <dbReference type="ChEBI" id="CHEBI:58210"/>
    </ligand>
</feature>
<feature type="binding site" evidence="1">
    <location>
        <position position="224"/>
    </location>
    <ligand>
        <name>FMN</name>
        <dbReference type="ChEBI" id="CHEBI:58210"/>
    </ligand>
</feature>
<feature type="binding site" evidence="1">
    <location>
        <begin position="274"/>
        <end position="276"/>
    </location>
    <ligand>
        <name>FMN</name>
        <dbReference type="ChEBI" id="CHEBI:58210"/>
    </ligand>
</feature>
<feature type="binding site" evidence="1">
    <location>
        <begin position="295"/>
        <end position="296"/>
    </location>
    <ligand>
        <name>FMN</name>
        <dbReference type="ChEBI" id="CHEBI:58210"/>
    </ligand>
</feature>
<accession>C3PNP9</accession>
<evidence type="ECO:0000255" key="1">
    <source>
        <dbReference type="HAMAP-Rule" id="MF_00354"/>
    </source>
</evidence>